<sequence>MAQVQYYGTGRRKSSVARVRLVPGDGKIVINNRDWEDYIPFAALREVIKQPLVATETLGNYDVLVNVHGGGYTGQAGAIRHGVARALLQVAPEYRPALKSAGLLTRDPRMKERKKYGLKGARRAPQFSKR</sequence>
<organism>
    <name type="scientific">Listeria monocytogenes serotype 4a (strain HCC23)</name>
    <dbReference type="NCBI Taxonomy" id="552536"/>
    <lineage>
        <taxon>Bacteria</taxon>
        <taxon>Bacillati</taxon>
        <taxon>Bacillota</taxon>
        <taxon>Bacilli</taxon>
        <taxon>Bacillales</taxon>
        <taxon>Listeriaceae</taxon>
        <taxon>Listeria</taxon>
    </lineage>
</organism>
<feature type="chain" id="PRO_1000146458" description="Small ribosomal subunit protein uS9">
    <location>
        <begin position="1"/>
        <end position="130"/>
    </location>
</feature>
<feature type="region of interest" description="Disordered" evidence="2">
    <location>
        <begin position="109"/>
        <end position="130"/>
    </location>
</feature>
<feature type="compositionally biased region" description="Basic residues" evidence="2">
    <location>
        <begin position="111"/>
        <end position="130"/>
    </location>
</feature>
<keyword id="KW-0687">Ribonucleoprotein</keyword>
<keyword id="KW-0689">Ribosomal protein</keyword>
<name>RS9_LISMH</name>
<proteinExistence type="inferred from homology"/>
<protein>
    <recommendedName>
        <fullName evidence="1">Small ribosomal subunit protein uS9</fullName>
    </recommendedName>
    <alternativeName>
        <fullName evidence="3">30S ribosomal protein S9</fullName>
    </alternativeName>
</protein>
<evidence type="ECO:0000255" key="1">
    <source>
        <dbReference type="HAMAP-Rule" id="MF_00532"/>
    </source>
</evidence>
<evidence type="ECO:0000256" key="2">
    <source>
        <dbReference type="SAM" id="MobiDB-lite"/>
    </source>
</evidence>
<evidence type="ECO:0000305" key="3"/>
<comment type="similarity">
    <text evidence="1">Belongs to the universal ribosomal protein uS9 family.</text>
</comment>
<dbReference type="EMBL" id="CP001175">
    <property type="protein sequence ID" value="ACK41269.1"/>
    <property type="molecule type" value="Genomic_DNA"/>
</dbReference>
<dbReference type="RefSeq" id="WP_003726075.1">
    <property type="nucleotide sequence ID" value="NC_011660.1"/>
</dbReference>
<dbReference type="SMR" id="B8DB44"/>
<dbReference type="GeneID" id="93236018"/>
<dbReference type="KEGG" id="lmh:LMHCC_2938"/>
<dbReference type="HOGENOM" id="CLU_046483_2_1_9"/>
<dbReference type="GO" id="GO:0022627">
    <property type="term" value="C:cytosolic small ribosomal subunit"/>
    <property type="evidence" value="ECO:0007669"/>
    <property type="project" value="TreeGrafter"/>
</dbReference>
<dbReference type="GO" id="GO:0003723">
    <property type="term" value="F:RNA binding"/>
    <property type="evidence" value="ECO:0007669"/>
    <property type="project" value="TreeGrafter"/>
</dbReference>
<dbReference type="GO" id="GO:0003735">
    <property type="term" value="F:structural constituent of ribosome"/>
    <property type="evidence" value="ECO:0007669"/>
    <property type="project" value="InterPro"/>
</dbReference>
<dbReference type="GO" id="GO:0006412">
    <property type="term" value="P:translation"/>
    <property type="evidence" value="ECO:0007669"/>
    <property type="project" value="UniProtKB-UniRule"/>
</dbReference>
<dbReference type="FunFam" id="3.30.230.10:FF:000001">
    <property type="entry name" value="30S ribosomal protein S9"/>
    <property type="match status" value="1"/>
</dbReference>
<dbReference type="Gene3D" id="3.30.230.10">
    <property type="match status" value="1"/>
</dbReference>
<dbReference type="HAMAP" id="MF_00532_B">
    <property type="entry name" value="Ribosomal_uS9_B"/>
    <property type="match status" value="1"/>
</dbReference>
<dbReference type="InterPro" id="IPR020568">
    <property type="entry name" value="Ribosomal_Su5_D2-typ_SF"/>
</dbReference>
<dbReference type="InterPro" id="IPR000754">
    <property type="entry name" value="Ribosomal_uS9"/>
</dbReference>
<dbReference type="InterPro" id="IPR023035">
    <property type="entry name" value="Ribosomal_uS9_bac/plastid"/>
</dbReference>
<dbReference type="InterPro" id="IPR020574">
    <property type="entry name" value="Ribosomal_uS9_CS"/>
</dbReference>
<dbReference type="InterPro" id="IPR014721">
    <property type="entry name" value="Ribsml_uS5_D2-typ_fold_subgr"/>
</dbReference>
<dbReference type="NCBIfam" id="NF001099">
    <property type="entry name" value="PRK00132.1"/>
    <property type="match status" value="1"/>
</dbReference>
<dbReference type="PANTHER" id="PTHR21569">
    <property type="entry name" value="RIBOSOMAL PROTEIN S9"/>
    <property type="match status" value="1"/>
</dbReference>
<dbReference type="PANTHER" id="PTHR21569:SF1">
    <property type="entry name" value="SMALL RIBOSOMAL SUBUNIT PROTEIN US9M"/>
    <property type="match status" value="1"/>
</dbReference>
<dbReference type="Pfam" id="PF00380">
    <property type="entry name" value="Ribosomal_S9"/>
    <property type="match status" value="1"/>
</dbReference>
<dbReference type="SUPFAM" id="SSF54211">
    <property type="entry name" value="Ribosomal protein S5 domain 2-like"/>
    <property type="match status" value="1"/>
</dbReference>
<dbReference type="PROSITE" id="PS00360">
    <property type="entry name" value="RIBOSOMAL_S9"/>
    <property type="match status" value="1"/>
</dbReference>
<gene>
    <name evidence="1" type="primary">rpsI</name>
    <name type="ordered locus">LMHCC_2938</name>
</gene>
<reference key="1">
    <citation type="journal article" date="2011" name="J. Bacteriol.">
        <title>Genome sequence of lineage III Listeria monocytogenes strain HCC23.</title>
        <authorList>
            <person name="Steele C.L."/>
            <person name="Donaldson J.R."/>
            <person name="Paul D."/>
            <person name="Banes M.M."/>
            <person name="Arick T."/>
            <person name="Bridges S.M."/>
            <person name="Lawrence M.L."/>
        </authorList>
    </citation>
    <scope>NUCLEOTIDE SEQUENCE [LARGE SCALE GENOMIC DNA]</scope>
    <source>
        <strain>HCC23</strain>
    </source>
</reference>
<accession>B8DB44</accession>